<evidence type="ECO:0000255" key="1">
    <source>
        <dbReference type="HAMAP-Rule" id="MF_00336"/>
    </source>
</evidence>
<sequence>MTVLAVTGTDTGVGKTVTTAALACAARLARRDVAVCKPVQTGTIDGDDDLGEVRRLSGVTALHGGWRYPEPLAPVAAAGRAGAPLPTRTELVGSVRAVDAAGRLTIVEGAGGLLVALGADGVTLRDLAHDLGAQVLIVVSPGLGTLNHTALTLEALAAHGLSCAGLVIGAWPAEPGVAELDNRTALEALAPVRAVLPAGAGAASPERFEALSAAAFDADWITSLS</sequence>
<dbReference type="EC" id="6.3.3.3" evidence="1"/>
<dbReference type="EMBL" id="CP000480">
    <property type="protein sequence ID" value="ABK71705.1"/>
    <property type="molecule type" value="Genomic_DNA"/>
</dbReference>
<dbReference type="EMBL" id="CP001663">
    <property type="protein sequence ID" value="AFP39572.1"/>
    <property type="molecule type" value="Genomic_DNA"/>
</dbReference>
<dbReference type="RefSeq" id="WP_011728882.1">
    <property type="nucleotide sequence ID" value="NZ_SIJM01000015.1"/>
</dbReference>
<dbReference type="RefSeq" id="YP_887504.1">
    <property type="nucleotide sequence ID" value="NC_008596.1"/>
</dbReference>
<dbReference type="SMR" id="A0QX66"/>
<dbReference type="STRING" id="246196.MSMEG_3190"/>
<dbReference type="PaxDb" id="246196-MSMEI_3108"/>
<dbReference type="GeneID" id="93457960"/>
<dbReference type="KEGG" id="msb:LJ00_15860"/>
<dbReference type="KEGG" id="msg:MSMEI_3108"/>
<dbReference type="KEGG" id="msm:MSMEG_3190"/>
<dbReference type="PATRIC" id="fig|246196.19.peg.3152"/>
<dbReference type="eggNOG" id="COG0132">
    <property type="taxonomic scope" value="Bacteria"/>
</dbReference>
<dbReference type="OrthoDB" id="9802610at2"/>
<dbReference type="UniPathway" id="UPA00078">
    <property type="reaction ID" value="UER00161"/>
</dbReference>
<dbReference type="Proteomes" id="UP000000757">
    <property type="component" value="Chromosome"/>
</dbReference>
<dbReference type="Proteomes" id="UP000006158">
    <property type="component" value="Chromosome"/>
</dbReference>
<dbReference type="GO" id="GO:0005829">
    <property type="term" value="C:cytosol"/>
    <property type="evidence" value="ECO:0007669"/>
    <property type="project" value="TreeGrafter"/>
</dbReference>
<dbReference type="GO" id="GO:0005524">
    <property type="term" value="F:ATP binding"/>
    <property type="evidence" value="ECO:0007669"/>
    <property type="project" value="UniProtKB-UniRule"/>
</dbReference>
<dbReference type="GO" id="GO:0004141">
    <property type="term" value="F:dethiobiotin synthase activity"/>
    <property type="evidence" value="ECO:0007669"/>
    <property type="project" value="UniProtKB-UniRule"/>
</dbReference>
<dbReference type="GO" id="GO:0000287">
    <property type="term" value="F:magnesium ion binding"/>
    <property type="evidence" value="ECO:0007669"/>
    <property type="project" value="UniProtKB-UniRule"/>
</dbReference>
<dbReference type="GO" id="GO:0009102">
    <property type="term" value="P:biotin biosynthetic process"/>
    <property type="evidence" value="ECO:0007669"/>
    <property type="project" value="UniProtKB-UniRule"/>
</dbReference>
<dbReference type="CDD" id="cd03109">
    <property type="entry name" value="DTBS"/>
    <property type="match status" value="1"/>
</dbReference>
<dbReference type="Gene3D" id="3.40.50.300">
    <property type="entry name" value="P-loop containing nucleotide triphosphate hydrolases"/>
    <property type="match status" value="1"/>
</dbReference>
<dbReference type="HAMAP" id="MF_00336">
    <property type="entry name" value="BioD"/>
    <property type="match status" value="1"/>
</dbReference>
<dbReference type="InterPro" id="IPR004472">
    <property type="entry name" value="DTB_synth_BioD"/>
</dbReference>
<dbReference type="InterPro" id="IPR027417">
    <property type="entry name" value="P-loop_NTPase"/>
</dbReference>
<dbReference type="NCBIfam" id="TIGR00347">
    <property type="entry name" value="bioD"/>
    <property type="match status" value="1"/>
</dbReference>
<dbReference type="PANTHER" id="PTHR43210">
    <property type="entry name" value="DETHIOBIOTIN SYNTHETASE"/>
    <property type="match status" value="1"/>
</dbReference>
<dbReference type="PANTHER" id="PTHR43210:SF5">
    <property type="entry name" value="DETHIOBIOTIN SYNTHETASE"/>
    <property type="match status" value="1"/>
</dbReference>
<dbReference type="Pfam" id="PF13500">
    <property type="entry name" value="AAA_26"/>
    <property type="match status" value="1"/>
</dbReference>
<dbReference type="PIRSF" id="PIRSF006755">
    <property type="entry name" value="DTB_synth"/>
    <property type="match status" value="1"/>
</dbReference>
<dbReference type="SUPFAM" id="SSF52540">
    <property type="entry name" value="P-loop containing nucleoside triphosphate hydrolases"/>
    <property type="match status" value="1"/>
</dbReference>
<name>BIOD_MYCS2</name>
<reference key="1">
    <citation type="submission" date="2006-10" db="EMBL/GenBank/DDBJ databases">
        <authorList>
            <person name="Fleischmann R.D."/>
            <person name="Dodson R.J."/>
            <person name="Haft D.H."/>
            <person name="Merkel J.S."/>
            <person name="Nelson W.C."/>
            <person name="Fraser C.M."/>
        </authorList>
    </citation>
    <scope>NUCLEOTIDE SEQUENCE [LARGE SCALE GENOMIC DNA]</scope>
    <source>
        <strain>ATCC 700084 / mc(2)155</strain>
    </source>
</reference>
<reference key="2">
    <citation type="journal article" date="2007" name="Genome Biol.">
        <title>Interrupted coding sequences in Mycobacterium smegmatis: authentic mutations or sequencing errors?</title>
        <authorList>
            <person name="Deshayes C."/>
            <person name="Perrodou E."/>
            <person name="Gallien S."/>
            <person name="Euphrasie D."/>
            <person name="Schaeffer C."/>
            <person name="Van-Dorsselaer A."/>
            <person name="Poch O."/>
            <person name="Lecompte O."/>
            <person name="Reyrat J.-M."/>
        </authorList>
    </citation>
    <scope>NUCLEOTIDE SEQUENCE [LARGE SCALE GENOMIC DNA]</scope>
    <source>
        <strain>ATCC 700084 / mc(2)155</strain>
    </source>
</reference>
<reference key="3">
    <citation type="journal article" date="2009" name="Genome Res.">
        <title>Ortho-proteogenomics: multiple proteomes investigation through orthology and a new MS-based protocol.</title>
        <authorList>
            <person name="Gallien S."/>
            <person name="Perrodou E."/>
            <person name="Carapito C."/>
            <person name="Deshayes C."/>
            <person name="Reyrat J.-M."/>
            <person name="Van Dorsselaer A."/>
            <person name="Poch O."/>
            <person name="Schaeffer C."/>
            <person name="Lecompte O."/>
        </authorList>
    </citation>
    <scope>NUCLEOTIDE SEQUENCE [LARGE SCALE GENOMIC DNA]</scope>
    <source>
        <strain>ATCC 700084 / mc(2)155</strain>
    </source>
</reference>
<proteinExistence type="inferred from homology"/>
<comment type="function">
    <text evidence="1">Catalyzes a mechanistically unusual reaction, the ATP-dependent insertion of CO2 between the N7 and N8 nitrogen atoms of 7,8-diaminopelargonic acid (DAPA, also called 7,8-diammoniononanoate) to form a ureido ring.</text>
</comment>
<comment type="catalytic activity">
    <reaction evidence="1">
        <text>(7R,8S)-7,8-diammoniononanoate + CO2 + ATP = (4R,5S)-dethiobiotin + ADP + phosphate + 3 H(+)</text>
        <dbReference type="Rhea" id="RHEA:15805"/>
        <dbReference type="ChEBI" id="CHEBI:15378"/>
        <dbReference type="ChEBI" id="CHEBI:16526"/>
        <dbReference type="ChEBI" id="CHEBI:30616"/>
        <dbReference type="ChEBI" id="CHEBI:43474"/>
        <dbReference type="ChEBI" id="CHEBI:149469"/>
        <dbReference type="ChEBI" id="CHEBI:149473"/>
        <dbReference type="ChEBI" id="CHEBI:456216"/>
        <dbReference type="EC" id="6.3.3.3"/>
    </reaction>
</comment>
<comment type="cofactor">
    <cofactor evidence="1">
        <name>Mg(2+)</name>
        <dbReference type="ChEBI" id="CHEBI:18420"/>
    </cofactor>
</comment>
<comment type="pathway">
    <text evidence="1">Cofactor biosynthesis; biotin biosynthesis; biotin from 7,8-diaminononanoate: step 1/2.</text>
</comment>
<comment type="subunit">
    <text evidence="1">Homodimer.</text>
</comment>
<comment type="subcellular location">
    <subcellularLocation>
        <location evidence="1">Cytoplasm</location>
    </subcellularLocation>
</comment>
<comment type="similarity">
    <text evidence="1">Belongs to the dethiobiotin synthetase family.</text>
</comment>
<keyword id="KW-0067">ATP-binding</keyword>
<keyword id="KW-0093">Biotin biosynthesis</keyword>
<keyword id="KW-0963">Cytoplasm</keyword>
<keyword id="KW-0436">Ligase</keyword>
<keyword id="KW-0460">Magnesium</keyword>
<keyword id="KW-0479">Metal-binding</keyword>
<keyword id="KW-0547">Nucleotide-binding</keyword>
<keyword id="KW-1185">Reference proteome</keyword>
<feature type="chain" id="PRO_0000302525" description="ATP-dependent dethiobiotin synthetase BioD">
    <location>
        <begin position="1"/>
        <end position="225"/>
    </location>
</feature>
<feature type="active site" evidence="1">
    <location>
        <position position="37"/>
    </location>
</feature>
<feature type="binding site" evidence="1">
    <location>
        <begin position="12"/>
        <end position="17"/>
    </location>
    <ligand>
        <name>ATP</name>
        <dbReference type="ChEBI" id="CHEBI:30616"/>
    </ligand>
</feature>
<feature type="binding site" evidence="1">
    <location>
        <position position="16"/>
    </location>
    <ligand>
        <name>Mg(2+)</name>
        <dbReference type="ChEBI" id="CHEBI:18420"/>
    </ligand>
</feature>
<feature type="binding site" evidence="1">
    <location>
        <position position="41"/>
    </location>
    <ligand>
        <name>substrate</name>
    </ligand>
</feature>
<feature type="binding site" evidence="1">
    <location>
        <position position="49"/>
    </location>
    <ligand>
        <name>ATP</name>
        <dbReference type="ChEBI" id="CHEBI:30616"/>
    </ligand>
</feature>
<feature type="binding site" evidence="1">
    <location>
        <position position="49"/>
    </location>
    <ligand>
        <name>Mg(2+)</name>
        <dbReference type="ChEBI" id="CHEBI:18420"/>
    </ligand>
</feature>
<feature type="binding site" evidence="1">
    <location>
        <begin position="108"/>
        <end position="111"/>
    </location>
    <ligand>
        <name>ATP</name>
        <dbReference type="ChEBI" id="CHEBI:30616"/>
    </ligand>
</feature>
<feature type="binding site" evidence="1">
    <location>
        <position position="108"/>
    </location>
    <ligand>
        <name>Mg(2+)</name>
        <dbReference type="ChEBI" id="CHEBI:18420"/>
    </ligand>
</feature>
<feature type="binding site" evidence="1">
    <location>
        <begin position="197"/>
        <end position="199"/>
    </location>
    <ligand>
        <name>ATP</name>
        <dbReference type="ChEBI" id="CHEBI:30616"/>
    </ligand>
</feature>
<gene>
    <name evidence="1" type="primary">bioD</name>
    <name type="ordered locus">MSMEG_3190</name>
    <name type="ordered locus">MSMEI_3108</name>
</gene>
<protein>
    <recommendedName>
        <fullName evidence="1">ATP-dependent dethiobiotin synthetase BioD</fullName>
        <ecNumber evidence="1">6.3.3.3</ecNumber>
    </recommendedName>
    <alternativeName>
        <fullName evidence="1">DTB synthetase</fullName>
        <shortName evidence="1">DTBS</shortName>
    </alternativeName>
    <alternativeName>
        <fullName evidence="1">Dethiobiotin synthase</fullName>
    </alternativeName>
</protein>
<organism>
    <name type="scientific">Mycolicibacterium smegmatis (strain ATCC 700084 / mc(2)155)</name>
    <name type="common">Mycobacterium smegmatis</name>
    <dbReference type="NCBI Taxonomy" id="246196"/>
    <lineage>
        <taxon>Bacteria</taxon>
        <taxon>Bacillati</taxon>
        <taxon>Actinomycetota</taxon>
        <taxon>Actinomycetes</taxon>
        <taxon>Mycobacteriales</taxon>
        <taxon>Mycobacteriaceae</taxon>
        <taxon>Mycolicibacterium</taxon>
    </lineage>
</organism>
<accession>A0QX66</accession>
<accession>I7G1E3</accession>